<dbReference type="EMBL" id="M83655">
    <property type="protein sequence ID" value="AAA24218.1"/>
    <property type="molecule type" value="Genomic_DNA"/>
</dbReference>
<dbReference type="EMBL" id="U00096">
    <property type="protein sequence ID" value="AAC74270.1"/>
    <property type="molecule type" value="Genomic_DNA"/>
</dbReference>
<dbReference type="EMBL" id="AP009048">
    <property type="protein sequence ID" value="BAA36033.1"/>
    <property type="molecule type" value="Genomic_DNA"/>
</dbReference>
<dbReference type="PIR" id="G64864">
    <property type="entry name" value="G64864"/>
</dbReference>
<dbReference type="RefSeq" id="NP_415704.1">
    <property type="nucleotide sequence ID" value="NC_000913.3"/>
</dbReference>
<dbReference type="RefSeq" id="WP_000406391.1">
    <property type="nucleotide sequence ID" value="NZ_STEB01000023.1"/>
</dbReference>
<dbReference type="SMR" id="P0AFA7"/>
<dbReference type="BioGRID" id="4260101">
    <property type="interactions" value="18"/>
</dbReference>
<dbReference type="BioGRID" id="849223">
    <property type="interactions" value="2"/>
</dbReference>
<dbReference type="FunCoup" id="P0AFA7">
    <property type="interactions" value="32"/>
</dbReference>
<dbReference type="STRING" id="511145.b1186"/>
<dbReference type="TCDB" id="2.A.34.1.1">
    <property type="family name" value="the nhab na(+):h(+) antiporter (nhab) family"/>
</dbReference>
<dbReference type="jPOST" id="P0AFA7"/>
<dbReference type="PaxDb" id="511145-b1186"/>
<dbReference type="EnsemblBacteria" id="AAC74270">
    <property type="protein sequence ID" value="AAC74270"/>
    <property type="gene ID" value="b1186"/>
</dbReference>
<dbReference type="GeneID" id="75203299"/>
<dbReference type="GeneID" id="944822"/>
<dbReference type="KEGG" id="ecj:JW1175"/>
<dbReference type="KEGG" id="eco:b1186"/>
<dbReference type="KEGG" id="ecoc:C3026_06985"/>
<dbReference type="PATRIC" id="fig|1411691.4.peg.1101"/>
<dbReference type="EchoBASE" id="EB1365"/>
<dbReference type="eggNOG" id="COG3067">
    <property type="taxonomic scope" value="Bacteria"/>
</dbReference>
<dbReference type="HOGENOM" id="CLU_041110_0_0_6"/>
<dbReference type="InParanoid" id="P0AFA7"/>
<dbReference type="OMA" id="FFIRMAP"/>
<dbReference type="OrthoDB" id="5288732at2"/>
<dbReference type="PhylomeDB" id="P0AFA7"/>
<dbReference type="BioCyc" id="EcoCyc:NHAB-MONOMER"/>
<dbReference type="BioCyc" id="MetaCyc:NHAB-MONOMER"/>
<dbReference type="PRO" id="PR:P0AFA7"/>
<dbReference type="Proteomes" id="UP000000625">
    <property type="component" value="Chromosome"/>
</dbReference>
<dbReference type="GO" id="GO:0005886">
    <property type="term" value="C:plasma membrane"/>
    <property type="evidence" value="ECO:0000314"/>
    <property type="project" value="EcoliWiki"/>
</dbReference>
<dbReference type="GO" id="GO:0015385">
    <property type="term" value="F:sodium:proton antiporter activity"/>
    <property type="evidence" value="ECO:0000314"/>
    <property type="project" value="EcoliWiki"/>
</dbReference>
<dbReference type="GO" id="GO:0010226">
    <property type="term" value="P:response to lithium ion"/>
    <property type="evidence" value="ECO:0000316"/>
    <property type="project" value="EcoCyc"/>
</dbReference>
<dbReference type="HAMAP" id="MF_01599">
    <property type="entry name" value="NhaB"/>
    <property type="match status" value="1"/>
</dbReference>
<dbReference type="InterPro" id="IPR004671">
    <property type="entry name" value="Na+/H+_antiporter_NhaB"/>
</dbReference>
<dbReference type="NCBIfam" id="TIGR00774">
    <property type="entry name" value="NhaB"/>
    <property type="match status" value="1"/>
</dbReference>
<dbReference type="NCBIfam" id="NF007093">
    <property type="entry name" value="PRK09547.1"/>
    <property type="match status" value="1"/>
</dbReference>
<dbReference type="PANTHER" id="PTHR43302:SF1">
    <property type="entry name" value="NA(+)_H(+) ANTIPORTER NHAB"/>
    <property type="match status" value="1"/>
</dbReference>
<dbReference type="PANTHER" id="PTHR43302">
    <property type="entry name" value="TRANSPORTER ARSB-RELATED"/>
    <property type="match status" value="1"/>
</dbReference>
<dbReference type="Pfam" id="PF06450">
    <property type="entry name" value="NhaB"/>
    <property type="match status" value="1"/>
</dbReference>
<protein>
    <recommendedName>
        <fullName evidence="1 8">Na(+)/H(+) antiporter NhaB</fullName>
    </recommendedName>
    <alternativeName>
        <fullName evidence="1 9">Sodium/proton antiporter NhaB</fullName>
    </alternativeName>
</protein>
<evidence type="ECO:0000255" key="1">
    <source>
        <dbReference type="HAMAP-Rule" id="MF_01599"/>
    </source>
</evidence>
<evidence type="ECO:0000269" key="2">
    <source>
    </source>
</evidence>
<evidence type="ECO:0000269" key="3">
    <source>
    </source>
</evidence>
<evidence type="ECO:0000269" key="4">
    <source>
    </source>
</evidence>
<evidence type="ECO:0000269" key="5">
    <source>
    </source>
</evidence>
<evidence type="ECO:0000269" key="6">
    <source>
    </source>
</evidence>
<evidence type="ECO:0000269" key="7">
    <source>
    </source>
</evidence>
<evidence type="ECO:0000303" key="8">
    <source>
    </source>
</evidence>
<evidence type="ECO:0000305" key="9"/>
<proteinExistence type="evidence at protein level"/>
<reference key="1">
    <citation type="journal article" date="1992" name="J. Biol. Chem.">
        <title>Cloning, sequencing, and expression of the nhaB gene, encoding a Na+/H+ antiporter in Escherichia coli.</title>
        <authorList>
            <person name="Pinner E."/>
            <person name="Padan E."/>
            <person name="Schuldiner S."/>
        </authorList>
    </citation>
    <scope>NUCLEOTIDE SEQUENCE [GENOMIC DNA]</scope>
    <scope>FUNCTION</scope>
    <source>
        <strain>K12</strain>
    </source>
</reference>
<reference key="2">
    <citation type="journal article" date="1996" name="DNA Res.">
        <title>A 718-kb DNA sequence of the Escherichia coli K-12 genome corresponding to the 12.7-28.0 min region on the linkage map.</title>
        <authorList>
            <person name="Oshima T."/>
            <person name="Aiba H."/>
            <person name="Baba T."/>
            <person name="Fujita K."/>
            <person name="Hayashi K."/>
            <person name="Honjo A."/>
            <person name="Ikemoto K."/>
            <person name="Inada T."/>
            <person name="Itoh T."/>
            <person name="Kajihara M."/>
            <person name="Kanai K."/>
            <person name="Kashimoto K."/>
            <person name="Kimura S."/>
            <person name="Kitagawa M."/>
            <person name="Makino K."/>
            <person name="Masuda S."/>
            <person name="Miki T."/>
            <person name="Mizobuchi K."/>
            <person name="Mori H."/>
            <person name="Motomura K."/>
            <person name="Nakamura Y."/>
            <person name="Nashimoto H."/>
            <person name="Nishio Y."/>
            <person name="Saito N."/>
            <person name="Sampei G."/>
            <person name="Seki Y."/>
            <person name="Tagami H."/>
            <person name="Takemoto K."/>
            <person name="Wada C."/>
            <person name="Yamamoto Y."/>
            <person name="Yano M."/>
            <person name="Horiuchi T."/>
        </authorList>
    </citation>
    <scope>NUCLEOTIDE SEQUENCE [LARGE SCALE GENOMIC DNA]</scope>
    <source>
        <strain>K12 / W3110 / ATCC 27325 / DSM 5911</strain>
    </source>
</reference>
<reference key="3">
    <citation type="journal article" date="1997" name="Science">
        <title>The complete genome sequence of Escherichia coli K-12.</title>
        <authorList>
            <person name="Blattner F.R."/>
            <person name="Plunkett G. III"/>
            <person name="Bloch C.A."/>
            <person name="Perna N.T."/>
            <person name="Burland V."/>
            <person name="Riley M."/>
            <person name="Collado-Vides J."/>
            <person name="Glasner J.D."/>
            <person name="Rode C.K."/>
            <person name="Mayhew G.F."/>
            <person name="Gregor J."/>
            <person name="Davis N.W."/>
            <person name="Kirkpatrick H.A."/>
            <person name="Goeden M.A."/>
            <person name="Rose D.J."/>
            <person name="Mau B."/>
            <person name="Shao Y."/>
        </authorList>
    </citation>
    <scope>NUCLEOTIDE SEQUENCE [LARGE SCALE GENOMIC DNA]</scope>
    <source>
        <strain>K12 / MG1655 / ATCC 47076</strain>
    </source>
</reference>
<reference key="4">
    <citation type="journal article" date="2006" name="Mol. Syst. Biol.">
        <title>Highly accurate genome sequences of Escherichia coli K-12 strains MG1655 and W3110.</title>
        <authorList>
            <person name="Hayashi K."/>
            <person name="Morooka N."/>
            <person name="Yamamoto Y."/>
            <person name="Fujita K."/>
            <person name="Isono K."/>
            <person name="Choi S."/>
            <person name="Ohtsubo E."/>
            <person name="Baba T."/>
            <person name="Wanner B.L."/>
            <person name="Mori H."/>
            <person name="Horiuchi T."/>
        </authorList>
    </citation>
    <scope>NUCLEOTIDE SEQUENCE [LARGE SCALE GENOMIC DNA]</scope>
    <source>
        <strain>K12 / W3110 / ATCC 27325 / DSM 5911</strain>
    </source>
</reference>
<reference key="5">
    <citation type="journal article" date="1993" name="J. Biol. Chem.">
        <title>Physiological role of nhaB, a specific Na+/H+ antiporter in Escherichia coli.</title>
        <authorList>
            <person name="Pinner E."/>
            <person name="Kotler Y."/>
            <person name="Padan E."/>
            <person name="Schuldiner S."/>
        </authorList>
    </citation>
    <scope>FUNCTION</scope>
    <scope>DISRUPTION PHENOTYPE</scope>
</reference>
<reference key="6">
    <citation type="journal article" date="1994" name="Biol. Pharm. Bull.">
        <title>Lithium toxicity and Na+(Li+)/H+ antiporter in Escherichia coli.</title>
        <authorList>
            <person name="Inaba K."/>
            <person name="Kuroda T."/>
            <person name="Shimamoto T."/>
            <person name="Kayahara T."/>
            <person name="Tsuda M."/>
            <person name="Tsuchiya T."/>
        </authorList>
    </citation>
    <scope>FUNCTION</scope>
    <scope>BIOPHYSICOCHEMICAL PROPERTIES</scope>
    <scope>DISRUPTION PHENOTYPE</scope>
    <source>
        <strain>K12</strain>
    </source>
</reference>
<reference key="7">
    <citation type="journal article" date="1994" name="J. Biochem.">
        <title>The NhaB Na+/H+ antiporter is essential for intracellular pH regulation under alkaline conditions in Escherichia coli.</title>
        <authorList>
            <person name="Shimamoto T."/>
            <person name="Inaba K."/>
            <person name="Thelen P."/>
            <person name="Ishikawa T."/>
            <person name="Goldberg E.B."/>
            <person name="Tsuda M."/>
            <person name="Tsuchiya T."/>
        </authorList>
    </citation>
    <scope>FUNCTION IN INTRACELLULAR PH REGULATION</scope>
    <source>
        <strain>K12</strain>
    </source>
</reference>
<reference key="8">
    <citation type="journal article" date="1994" name="J. Biol. Chem.">
        <title>Kinetic properties of NhaB, a Na+/H+ antiporter from Escherichia coli.</title>
        <authorList>
            <person name="Pinner E."/>
            <person name="Padan E."/>
            <person name="Schuldiner S."/>
        </authorList>
    </citation>
    <scope>FUNCTION</scope>
    <scope>STOICHIOMETRY</scope>
    <scope>CATALYTIC ACTIVITY</scope>
    <scope>ACTIVITY REGULATION</scope>
    <scope>BIOPHYSICOCHEMICAL PROPERTIES</scope>
    <source>
        <strain>K12</strain>
    </source>
</reference>
<reference key="9">
    <citation type="journal article" date="2005" name="Science">
        <title>Global topology analysis of the Escherichia coli inner membrane proteome.</title>
        <authorList>
            <person name="Daley D.O."/>
            <person name="Rapp M."/>
            <person name="Granseth E."/>
            <person name="Melen K."/>
            <person name="Drew D."/>
            <person name="von Heijne G."/>
        </authorList>
    </citation>
    <scope>SUBCELLULAR LOCATION</scope>
    <source>
        <strain>K12 / MG1655 / ATCC 47076</strain>
    </source>
</reference>
<sequence length="513" mass="56728">MEISWGRALWRNFLGQSPDWYKLALIIFLIVNPLIFLISPFVAGWLLVAEFIFTLAMALKCYPLLPGGLLAIEAVFIGMTSAEHVREEVAANLEVLLLLMFMVAGIYFMKQLLLFIFTRLLLSIRSKMLLSLSFCVAAAFLSAFLDALTVVAVVISVAVGFYGIYHRVASSRTEDTDLQDDSHIDKHYKVVLEQFRGFLRSLMMHAGVGTALGGVMTMVGEPQNLIIAKAAGWHFGDFFLRMSPVTVPVLICGLLTCLLVEKLRWFGYGETLPEKVREVLQQFDDQSRHQRTRQDKIRLIVQAIIGVWLVTALALHLAEVGLIGLSVIILATSLTGVTDEHAIGKAFTESLPFTALLTVFFSVVAVIIDQQLFSPIIQFVLQASEHAQLSLFYIFNGLLSSISDNVFVGTIYINEAKAAMESGAITLKQYELLAVAINTGTNLPSVATPNGQAAFLFLLTSALAPLIRLSYGRMVWMALPYTLVLTLVGLLCVEFTLAPVTEWFMQMGWIATL</sequence>
<comment type="function">
    <text evidence="2 4 5 6 7">Na(+)/H(+) antiporter that extrudes sodium in exchange for external protons (PubMed:1317851, PubMed:7929345, PubMed:8019504, PubMed:8093613). Catalyzes the exchange of 3 H(+) per 2 Na(+) (PubMed:7929345). Can also transport lithium (PubMed:8019504). Essential for regulation of intracellular pH under alkaline conditions (PubMed:7822245). Is necessary for growth on Na(+)/symport substrates such as glutamate and proline under conditions in which nhaA is not expressed, such as acidic pH and low Na(+) concentration (PubMed:8093613).</text>
</comment>
<comment type="catalytic activity">
    <reaction evidence="1 5">
        <text>2 Na(+)(in) + 3 H(+)(out) = 2 Na(+)(out) + 3 H(+)(in)</text>
        <dbReference type="Rhea" id="RHEA:29247"/>
        <dbReference type="ChEBI" id="CHEBI:15378"/>
        <dbReference type="ChEBI" id="CHEBI:29101"/>
    </reaction>
    <physiologicalReaction direction="left-to-right" evidence="1 5">
        <dbReference type="Rhea" id="RHEA:29248"/>
    </physiologicalReaction>
</comment>
<comment type="activity regulation">
    <text evidence="5">Activity is weakly pH-dependent.</text>
</comment>
<comment type="biophysicochemical properties">
    <kinetics>
        <KM evidence="5">16.66 mM for Na(+) (at pH 7.2)</KM>
        <KM evidence="5">3.44 mM for Na(+) (at pH 7.6)</KM>
        <KM evidence="5">1.53 mM for Na(+) (at pH 8.5)</KM>
        <KM evidence="6">0.73 mM for Na(+)</KM>
        <KM evidence="6">0.63 mM for Li(+)</KM>
        <Vmax evidence="5">107.0 umol/min/mg enzyme (at pH 7.2)</Vmax>
        <Vmax evidence="5">67.5 umol/min/mg enzyme (at pH 7.6)</Vmax>
        <Vmax evidence="5">87.8 umol/min/mg enzyme (at pH 8.5)</Vmax>
    </kinetics>
</comment>
<comment type="subcellular location">
    <subcellularLocation>
        <location evidence="1 3">Cell inner membrane</location>
        <topology evidence="1">Multi-pass membrane protein</topology>
    </subcellularLocation>
</comment>
<comment type="disruption phenotype">
    <text evidence="6 7">At pH 6 and at low Na(+) concentrations, deletion mutant grows slower than the wild type and its Na(+) dependent transport of glutamate and proline is markedly inhibited. However, when grown on these substrates at higher pH (7.5), mutant does not show any specific phenotype. A mutant devoid of both nhaA and nhaB is extremely sensitive to Na(+) and Li(+) at all pH values, and membranes prepared from this strain show no Na(+)/H(+) antiporter activity (PubMed:8093613). A mutant lacking this gene can grow in the presence of 0.6 M LiCl, but a mutant lacking both nhaA and nhaB cannot grow in the presence of 30 mM LiCl (PubMed:8019504).</text>
</comment>
<comment type="miscellaneous">
    <text evidence="7">NhaB seems crucial when the level of NhaA activity is growth limiting, when nhaA is not sufficiently induced, and/or when NhaA is not activated.</text>
</comment>
<comment type="similarity">
    <text evidence="1 9">Belongs to the NhaB Na(+)/H(+) (TC 2.A.34) antiporter family.</text>
</comment>
<feature type="chain" id="PRO_0000052412" description="Na(+)/H(+) antiporter NhaB">
    <location>
        <begin position="1"/>
        <end position="513"/>
    </location>
</feature>
<feature type="transmembrane region" description="Helical" evidence="1">
    <location>
        <begin position="23"/>
        <end position="43"/>
    </location>
</feature>
<feature type="transmembrane region" description="Helical" evidence="1">
    <location>
        <begin position="52"/>
        <end position="72"/>
    </location>
</feature>
<feature type="transmembrane region" description="Helical" evidence="1">
    <location>
        <begin position="97"/>
        <end position="117"/>
    </location>
</feature>
<feature type="transmembrane region" description="Helical" evidence="1">
    <location>
        <begin position="120"/>
        <end position="140"/>
    </location>
</feature>
<feature type="transmembrane region" description="Helical" evidence="1">
    <location>
        <begin position="144"/>
        <end position="164"/>
    </location>
</feature>
<feature type="transmembrane region" description="Helical" evidence="1">
    <location>
        <begin position="202"/>
        <end position="222"/>
    </location>
</feature>
<feature type="transmembrane region" description="Helical" evidence="1">
    <location>
        <begin position="238"/>
        <end position="258"/>
    </location>
</feature>
<feature type="transmembrane region" description="Helical" evidence="1">
    <location>
        <begin position="303"/>
        <end position="323"/>
    </location>
</feature>
<feature type="transmembrane region" description="Helical" evidence="1">
    <location>
        <begin position="348"/>
        <end position="368"/>
    </location>
</feature>
<feature type="transmembrane region" description="Helical" evidence="1">
    <location>
        <begin position="391"/>
        <end position="411"/>
    </location>
</feature>
<feature type="transmembrane region" description="Helical" evidence="1">
    <location>
        <begin position="447"/>
        <end position="467"/>
    </location>
</feature>
<feature type="transmembrane region" description="Helical" evidence="1">
    <location>
        <begin position="475"/>
        <end position="495"/>
    </location>
</feature>
<feature type="sequence conflict" description="In Ref. 1; AAA24218." evidence="9" ref="1">
    <original>MEISWGRALWR</original>
    <variation>MA</variation>
    <location>
        <begin position="1"/>
        <end position="11"/>
    </location>
</feature>
<accession>P0AFA7</accession>
<accession>P27377</accession>
<accession>P77533</accession>
<keyword id="KW-0050">Antiport</keyword>
<keyword id="KW-0997">Cell inner membrane</keyword>
<keyword id="KW-1003">Cell membrane</keyword>
<keyword id="KW-0406">Ion transport</keyword>
<keyword id="KW-0472">Membrane</keyword>
<keyword id="KW-1185">Reference proteome</keyword>
<keyword id="KW-0915">Sodium</keyword>
<keyword id="KW-0739">Sodium transport</keyword>
<keyword id="KW-0812">Transmembrane</keyword>
<keyword id="KW-1133">Transmembrane helix</keyword>
<keyword id="KW-0813">Transport</keyword>
<organism>
    <name type="scientific">Escherichia coli (strain K12)</name>
    <dbReference type="NCBI Taxonomy" id="83333"/>
    <lineage>
        <taxon>Bacteria</taxon>
        <taxon>Pseudomonadati</taxon>
        <taxon>Pseudomonadota</taxon>
        <taxon>Gammaproteobacteria</taxon>
        <taxon>Enterobacterales</taxon>
        <taxon>Enterobacteriaceae</taxon>
        <taxon>Escherichia</taxon>
    </lineage>
</organism>
<gene>
    <name evidence="1 8" type="primary">nhaB</name>
    <name type="ordered locus">b1186</name>
    <name type="ordered locus">JW1175</name>
</gene>
<name>NHAB_ECOLI</name>